<reference key="1">
    <citation type="journal article" date="1996" name="DNA Res.">
        <title>A 718-kb DNA sequence of the Escherichia coli K-12 genome corresponding to the 12.7-28.0 min region on the linkage map.</title>
        <authorList>
            <person name="Oshima T."/>
            <person name="Aiba H."/>
            <person name="Baba T."/>
            <person name="Fujita K."/>
            <person name="Hayashi K."/>
            <person name="Honjo A."/>
            <person name="Ikemoto K."/>
            <person name="Inada T."/>
            <person name="Itoh T."/>
            <person name="Kajihara M."/>
            <person name="Kanai K."/>
            <person name="Kashimoto K."/>
            <person name="Kimura S."/>
            <person name="Kitagawa M."/>
            <person name="Makino K."/>
            <person name="Masuda S."/>
            <person name="Miki T."/>
            <person name="Mizobuchi K."/>
            <person name="Mori H."/>
            <person name="Motomura K."/>
            <person name="Nakamura Y."/>
            <person name="Nashimoto H."/>
            <person name="Nishio Y."/>
            <person name="Saito N."/>
            <person name="Sampei G."/>
            <person name="Seki Y."/>
            <person name="Tagami H."/>
            <person name="Takemoto K."/>
            <person name="Wada C."/>
            <person name="Yamamoto Y."/>
            <person name="Yano M."/>
            <person name="Horiuchi T."/>
        </authorList>
    </citation>
    <scope>NUCLEOTIDE SEQUENCE [LARGE SCALE GENOMIC DNA]</scope>
    <source>
        <strain>K12 / W3110 / ATCC 27325 / DSM 5911</strain>
    </source>
</reference>
<reference key="2">
    <citation type="journal article" date="1997" name="Science">
        <title>The complete genome sequence of Escherichia coli K-12.</title>
        <authorList>
            <person name="Blattner F.R."/>
            <person name="Plunkett G. III"/>
            <person name="Bloch C.A."/>
            <person name="Perna N.T."/>
            <person name="Burland V."/>
            <person name="Riley M."/>
            <person name="Collado-Vides J."/>
            <person name="Glasner J.D."/>
            <person name="Rode C.K."/>
            <person name="Mayhew G.F."/>
            <person name="Gregor J."/>
            <person name="Davis N.W."/>
            <person name="Kirkpatrick H.A."/>
            <person name="Goeden M.A."/>
            <person name="Rose D.J."/>
            <person name="Mau B."/>
            <person name="Shao Y."/>
        </authorList>
    </citation>
    <scope>NUCLEOTIDE SEQUENCE [LARGE SCALE GENOMIC DNA]</scope>
    <source>
        <strain>K12 / MG1655 / ATCC 47076</strain>
    </source>
</reference>
<reference key="3">
    <citation type="journal article" date="2006" name="Mol. Syst. Biol.">
        <title>Highly accurate genome sequences of Escherichia coli K-12 strains MG1655 and W3110.</title>
        <authorList>
            <person name="Hayashi K."/>
            <person name="Morooka N."/>
            <person name="Yamamoto Y."/>
            <person name="Fujita K."/>
            <person name="Isono K."/>
            <person name="Choi S."/>
            <person name="Ohtsubo E."/>
            <person name="Baba T."/>
            <person name="Wanner B.L."/>
            <person name="Mori H."/>
            <person name="Horiuchi T."/>
        </authorList>
    </citation>
    <scope>NUCLEOTIDE SEQUENCE [LARGE SCALE GENOMIC DNA]</scope>
    <source>
        <strain>K12 / W3110 / ATCC 27325 / DSM 5911</strain>
    </source>
</reference>
<reference key="4">
    <citation type="journal article" date="2003" name="Protein Sci.">
        <title>Prediction of lipoprotein signal peptides in Gram-negative bacteria.</title>
        <authorList>
            <person name="Juncker A.S."/>
            <person name="Willenbrock H."/>
            <person name="Von Heijne G."/>
            <person name="Brunak S."/>
            <person name="Nielsen H."/>
            <person name="Krogh A."/>
        </authorList>
    </citation>
    <scope>SUBCELLULAR LOCATION</scope>
</reference>
<reference key="5">
    <citation type="journal article" date="2009" name="Mol. Microbiol.">
        <title>A conserved small RNA promotes silencing of the outer membrane protein YbfM.</title>
        <authorList>
            <person name="Rasmussen A.A."/>
            <person name="Johansen J."/>
            <person name="Nielsen J.S."/>
            <person name="Overgaard M."/>
            <person name="Kallipolitis B."/>
            <person name="Valentin-Hansen P."/>
        </authorList>
    </citation>
    <scope>INDUCTION</scope>
    <source>
        <strain>K12</strain>
    </source>
</reference>
<reference key="6">
    <citation type="journal article" date="2009" name="Mol. Microbiol.">
        <title>Switching off small RNA regulation with trap-mRNA.</title>
        <authorList>
            <person name="Overgaard M."/>
            <person name="Johansen J."/>
            <person name="Moller-Jensen J."/>
            <person name="Valentin-Hansen P."/>
        </authorList>
    </citation>
    <scope>INDUCTION</scope>
    <source>
        <strain>K12</strain>
    </source>
</reference>
<proteinExistence type="evidence at transcript level"/>
<gene>
    <name type="primary">chiQ</name>
    <name type="synonym">ybfN</name>
    <name type="ordered locus">b0682</name>
    <name type="ordered locus">JW0668</name>
</gene>
<feature type="signal peptide" evidence="1">
    <location>
        <begin position="1"/>
        <end position="16"/>
    </location>
</feature>
<feature type="chain" id="PRO_0000018039" description="Uncharacterized lipoprotein ChiQ">
    <location>
        <begin position="17"/>
        <end position="108"/>
    </location>
</feature>
<feature type="lipid moiety-binding region" description="N-palmitoyl cysteine" evidence="1">
    <location>
        <position position="17"/>
    </location>
</feature>
<feature type="lipid moiety-binding region" description="S-diacylglycerol cysteine" evidence="1">
    <location>
        <position position="17"/>
    </location>
</feature>
<organism>
    <name type="scientific">Escherichia coli (strain K12)</name>
    <dbReference type="NCBI Taxonomy" id="83333"/>
    <lineage>
        <taxon>Bacteria</taxon>
        <taxon>Pseudomonadati</taxon>
        <taxon>Pseudomonadota</taxon>
        <taxon>Gammaproteobacteria</taxon>
        <taxon>Enterobacterales</taxon>
        <taxon>Enterobacteriaceae</taxon>
        <taxon>Escherichia</taxon>
    </lineage>
</organism>
<name>CHIQ_ECOLI</name>
<comment type="subcellular location">
    <subcellularLocation>
        <location evidence="4">Cell membrane</location>
        <topology evidence="4">Lipid-anchor</topology>
    </subcellularLocation>
</comment>
<comment type="induction">
    <text evidence="2 3">In the absence of chitobiose, expression of chiPQ is silenced by the MicM small regulatory RNA (sRNA), which sequesters the ribosome binding site of the chiPQ mRNA by an antisense mechanism. In the presence of chitosugars, the chbBCARFG chitobiose operon is induced and acts as an RNA trap to degrade the constitutively expressed MicM, leading to the translation of chiPQ.</text>
</comment>
<dbReference type="EMBL" id="U00096">
    <property type="protein sequence ID" value="AAC73776.1"/>
    <property type="molecule type" value="Genomic_DNA"/>
</dbReference>
<dbReference type="EMBL" id="AP009048">
    <property type="protein sequence ID" value="BAA35330.1"/>
    <property type="molecule type" value="Genomic_DNA"/>
</dbReference>
<dbReference type="PIR" id="A64803">
    <property type="entry name" value="A64803"/>
</dbReference>
<dbReference type="RefSeq" id="NP_415208.1">
    <property type="nucleotide sequence ID" value="NC_000913.3"/>
</dbReference>
<dbReference type="RefSeq" id="WP_000733579.1">
    <property type="nucleotide sequence ID" value="NZ_SSZK01000045.1"/>
</dbReference>
<dbReference type="SMR" id="P75734"/>
<dbReference type="BioGRID" id="4261791">
    <property type="interactions" value="158"/>
</dbReference>
<dbReference type="FunCoup" id="P75734">
    <property type="interactions" value="181"/>
</dbReference>
<dbReference type="STRING" id="511145.b0682"/>
<dbReference type="PaxDb" id="511145-b0682"/>
<dbReference type="EnsemblBacteria" id="AAC73776">
    <property type="protein sequence ID" value="AAC73776"/>
    <property type="gene ID" value="b0682"/>
</dbReference>
<dbReference type="GeneID" id="945713"/>
<dbReference type="KEGG" id="ecj:JW0668"/>
<dbReference type="KEGG" id="eco:b0682"/>
<dbReference type="KEGG" id="ecoc:C3026_03390"/>
<dbReference type="PATRIC" id="fig|511145.12.peg.711"/>
<dbReference type="EchoBASE" id="EB3424"/>
<dbReference type="eggNOG" id="ENOG5031F99">
    <property type="taxonomic scope" value="Bacteria"/>
</dbReference>
<dbReference type="HOGENOM" id="CLU_2192888_0_0_6"/>
<dbReference type="InParanoid" id="P75734"/>
<dbReference type="OMA" id="QFAEQET"/>
<dbReference type="OrthoDB" id="6560384at2"/>
<dbReference type="PhylomeDB" id="P75734"/>
<dbReference type="BioCyc" id="EcoCyc:G6371-MONOMER"/>
<dbReference type="PRO" id="PR:P75734"/>
<dbReference type="Proteomes" id="UP000000625">
    <property type="component" value="Chromosome"/>
</dbReference>
<dbReference type="GO" id="GO:0005886">
    <property type="term" value="C:plasma membrane"/>
    <property type="evidence" value="ECO:0007669"/>
    <property type="project" value="UniProtKB-SubCell"/>
</dbReference>
<dbReference type="InterPro" id="IPR025727">
    <property type="entry name" value="YbfN-like"/>
</dbReference>
<dbReference type="Pfam" id="PF13982">
    <property type="entry name" value="YbfN"/>
    <property type="match status" value="1"/>
</dbReference>
<dbReference type="PROSITE" id="PS51257">
    <property type="entry name" value="PROKAR_LIPOPROTEIN"/>
    <property type="match status" value="1"/>
</dbReference>
<accession>P75734</accession>
<evidence type="ECO:0000255" key="1">
    <source>
        <dbReference type="PROSITE-ProRule" id="PRU00303"/>
    </source>
</evidence>
<evidence type="ECO:0000269" key="2">
    <source>
    </source>
</evidence>
<evidence type="ECO:0000269" key="3">
    <source>
    </source>
</evidence>
<evidence type="ECO:0000305" key="4">
    <source>
    </source>
</evidence>
<sequence length="108" mass="11999">MKKLILIAIMASGLVACAQSTAPQEDSRLKEAYSACINTAQGSPEKIEACQSVLNVLKKEKQHQQFADQESVRVLDYQQCLRATQTGNDQAVKADCDKVWQEIRSNNK</sequence>
<keyword id="KW-1003">Cell membrane</keyword>
<keyword id="KW-0449">Lipoprotein</keyword>
<keyword id="KW-0472">Membrane</keyword>
<keyword id="KW-0564">Palmitate</keyword>
<keyword id="KW-1185">Reference proteome</keyword>
<keyword id="KW-0732">Signal</keyword>
<protein>
    <recommendedName>
        <fullName>Uncharacterized lipoprotein ChiQ</fullName>
    </recommendedName>
</protein>